<name>ISPE_ARATH</name>
<proteinExistence type="evidence at transcript level"/>
<protein>
    <recommendedName>
        <fullName>4-diphosphocytidyl-2-C-methyl-D-erythritol kinase, chloroplastic</fullName>
        <ecNumber>2.7.1.148</ecNumber>
    </recommendedName>
    <alternativeName>
        <fullName>4-(cytidine-5'-diphospho)-2-C-methyl-D-erythritol kinase</fullName>
        <shortName>CDPMEK</shortName>
        <shortName>CMEK</shortName>
    </alternativeName>
    <alternativeName>
        <fullName>Protein PIGMENT DEFECTIVE 277</fullName>
    </alternativeName>
</protein>
<reference key="1">
    <citation type="submission" date="2000-01" db="EMBL/GenBank/DDBJ databases">
        <title>4-(cytidine 5'-diphospho)-2-C-methyl-D-erythritol kinase.</title>
        <authorList>
            <person name="Okada K."/>
            <person name="Kawaide H."/>
            <person name="Kuzuyama T."/>
            <person name="Takagi M."/>
            <person name="Seto H."/>
            <person name="Kamiya Y."/>
        </authorList>
    </citation>
    <scope>NUCLEOTIDE SEQUENCE [MRNA]</scope>
    <source>
        <strain>cv. Columbia</strain>
    </source>
</reference>
<reference key="2">
    <citation type="submission" date="2000-07" db="EMBL/GenBank/DDBJ databases">
        <authorList>
            <person name="Wungsintaweekul J."/>
            <person name="Rohdich F."/>
        </authorList>
    </citation>
    <scope>NUCLEOTIDE SEQUENCE [MRNA]</scope>
</reference>
<reference key="3">
    <citation type="journal article" date="1999" name="Nature">
        <title>Sequence and analysis of chromosome 2 of the plant Arabidopsis thaliana.</title>
        <authorList>
            <person name="Lin X."/>
            <person name="Kaul S."/>
            <person name="Rounsley S.D."/>
            <person name="Shea T.P."/>
            <person name="Benito M.-I."/>
            <person name="Town C.D."/>
            <person name="Fujii C.Y."/>
            <person name="Mason T.M."/>
            <person name="Bowman C.L."/>
            <person name="Barnstead M.E."/>
            <person name="Feldblyum T.V."/>
            <person name="Buell C.R."/>
            <person name="Ketchum K.A."/>
            <person name="Lee J.J."/>
            <person name="Ronning C.M."/>
            <person name="Koo H.L."/>
            <person name="Moffat K.S."/>
            <person name="Cronin L.A."/>
            <person name="Shen M."/>
            <person name="Pai G."/>
            <person name="Van Aken S."/>
            <person name="Umayam L."/>
            <person name="Tallon L.J."/>
            <person name="Gill J.E."/>
            <person name="Adams M.D."/>
            <person name="Carrera A.J."/>
            <person name="Creasy T.H."/>
            <person name="Goodman H.M."/>
            <person name="Somerville C.R."/>
            <person name="Copenhaver G.P."/>
            <person name="Preuss D."/>
            <person name="Nierman W.C."/>
            <person name="White O."/>
            <person name="Eisen J.A."/>
            <person name="Salzberg S.L."/>
            <person name="Fraser C.M."/>
            <person name="Venter J.C."/>
        </authorList>
    </citation>
    <scope>NUCLEOTIDE SEQUENCE [LARGE SCALE GENOMIC DNA]</scope>
    <source>
        <strain>cv. Columbia</strain>
    </source>
</reference>
<reference key="4">
    <citation type="journal article" date="2017" name="Plant J.">
        <title>Araport11: a complete reannotation of the Arabidopsis thaliana reference genome.</title>
        <authorList>
            <person name="Cheng C.Y."/>
            <person name="Krishnakumar V."/>
            <person name="Chan A.P."/>
            <person name="Thibaud-Nissen F."/>
            <person name="Schobel S."/>
            <person name="Town C.D."/>
        </authorList>
    </citation>
    <scope>GENOME REANNOTATION</scope>
    <source>
        <strain>cv. Columbia</strain>
    </source>
</reference>
<reference key="5">
    <citation type="journal article" date="2003" name="Science">
        <title>Empirical analysis of transcriptional activity in the Arabidopsis genome.</title>
        <authorList>
            <person name="Yamada K."/>
            <person name="Lim J."/>
            <person name="Dale J.M."/>
            <person name="Chen H."/>
            <person name="Shinn P."/>
            <person name="Palm C.J."/>
            <person name="Southwick A.M."/>
            <person name="Wu H.C."/>
            <person name="Kim C.J."/>
            <person name="Nguyen M."/>
            <person name="Pham P.K."/>
            <person name="Cheuk R.F."/>
            <person name="Karlin-Newmann G."/>
            <person name="Liu S.X."/>
            <person name="Lam B."/>
            <person name="Sakano H."/>
            <person name="Wu T."/>
            <person name="Yu G."/>
            <person name="Miranda M."/>
            <person name="Quach H.L."/>
            <person name="Tripp M."/>
            <person name="Chang C.H."/>
            <person name="Lee J.M."/>
            <person name="Toriumi M.J."/>
            <person name="Chan M.M."/>
            <person name="Tang C.C."/>
            <person name="Onodera C.S."/>
            <person name="Deng J.M."/>
            <person name="Akiyama K."/>
            <person name="Ansari Y."/>
            <person name="Arakawa T."/>
            <person name="Banh J."/>
            <person name="Banno F."/>
            <person name="Bowser L."/>
            <person name="Brooks S.Y."/>
            <person name="Carninci P."/>
            <person name="Chao Q."/>
            <person name="Choy N."/>
            <person name="Enju A."/>
            <person name="Goldsmith A.D."/>
            <person name="Gurjal M."/>
            <person name="Hansen N.F."/>
            <person name="Hayashizaki Y."/>
            <person name="Johnson-Hopson C."/>
            <person name="Hsuan V.W."/>
            <person name="Iida K."/>
            <person name="Karnes M."/>
            <person name="Khan S."/>
            <person name="Koesema E."/>
            <person name="Ishida J."/>
            <person name="Jiang P.X."/>
            <person name="Jones T."/>
            <person name="Kawai J."/>
            <person name="Kamiya A."/>
            <person name="Meyers C."/>
            <person name="Nakajima M."/>
            <person name="Narusaka M."/>
            <person name="Seki M."/>
            <person name="Sakurai T."/>
            <person name="Satou M."/>
            <person name="Tamse R."/>
            <person name="Vaysberg M."/>
            <person name="Wallender E.K."/>
            <person name="Wong C."/>
            <person name="Yamamura Y."/>
            <person name="Yuan S."/>
            <person name="Shinozaki K."/>
            <person name="Davis R.W."/>
            <person name="Theologis A."/>
            <person name="Ecker J.R."/>
        </authorList>
    </citation>
    <scope>NUCLEOTIDE SEQUENCE [LARGE SCALE MRNA]</scope>
    <source>
        <strain>cv. Columbia</strain>
    </source>
</reference>
<reference key="6">
    <citation type="journal article" date="2005" name="Plant Physiol.">
        <title>The Arabidopsis IspH homolog is involved in the plastid nonmevalonate pathway of isoprenoid biosynthesis.</title>
        <authorList>
            <person name="Hsieh M.H."/>
            <person name="Goodman H.M."/>
        </authorList>
    </citation>
    <scope>INDUCTION</scope>
</reference>
<reference key="7">
    <citation type="journal article" date="2008" name="Plant Mol. Biol.">
        <title>Chloroplast localization of methylerythritol 4-phosphate pathway enzymes and regulation of mitochondrial genes in ispD and ispE albino mutants in Arabidopsis.</title>
        <authorList>
            <person name="Hsieh M.H."/>
            <person name="Chang C.Y."/>
            <person name="Hsu S.J."/>
            <person name="Chen J.J."/>
        </authorList>
    </citation>
    <scope>FUNCTION</scope>
    <scope>SUBCELLULAR LOCATION</scope>
    <scope>TISSUE SPECIFICITY</scope>
    <scope>INDUCTION</scope>
    <scope>DISRUPTION PHENOTYPE</scope>
</reference>
<keyword id="KW-0067">ATP-binding</keyword>
<keyword id="KW-0150">Chloroplast</keyword>
<keyword id="KW-0414">Isoprene biosynthesis</keyword>
<keyword id="KW-0418">Kinase</keyword>
<keyword id="KW-0547">Nucleotide-binding</keyword>
<keyword id="KW-0934">Plastid</keyword>
<keyword id="KW-1185">Reference proteome</keyword>
<keyword id="KW-0808">Transferase</keyword>
<keyword id="KW-0809">Transit peptide</keyword>
<comment type="function">
    <text evidence="3">Enzyme of the plastid non-mevalonate pathway for isoprenoid biosynthesis that catalyzes the phosphorylation of the position 2 hydroxy group of 4-diphosphocytidyl-2C-methyl-D-erythritol. Is essential for chloroplast development.</text>
</comment>
<comment type="catalytic activity">
    <reaction>
        <text>4-CDP-2-C-methyl-D-erythritol + ATP = 4-CDP-2-C-methyl-D-erythritol 2-phosphate + ADP + H(+)</text>
        <dbReference type="Rhea" id="RHEA:18437"/>
        <dbReference type="ChEBI" id="CHEBI:15378"/>
        <dbReference type="ChEBI" id="CHEBI:30616"/>
        <dbReference type="ChEBI" id="CHEBI:57823"/>
        <dbReference type="ChEBI" id="CHEBI:57919"/>
        <dbReference type="ChEBI" id="CHEBI:456216"/>
        <dbReference type="EC" id="2.7.1.148"/>
    </reaction>
</comment>
<comment type="pathway">
    <text>Isoprenoid biosynthesis; isopentenyl diphosphate biosynthesis via DXP pathway; isopentenyl diphosphate from 1-deoxy-D-xylulose 5-phosphate: step 3/6.</text>
</comment>
<comment type="subcellular location">
    <subcellularLocation>
        <location evidence="5">Plastid</location>
        <location evidence="5">Chloroplast stroma</location>
    </subcellularLocation>
</comment>
<comment type="tissue specificity">
    <text evidence="3">Expressed in leaves, stems, flowers and siliques.</text>
</comment>
<comment type="induction">
    <text evidence="2 3">Circadian-regulated with a peak in the late period of the light phase.</text>
</comment>
<comment type="disruption phenotype">
    <text evidence="3">Albino phenotype and seedling lethal when homozygous. The phenotype is caused by an early arrest in chloroplast differentiation.</text>
</comment>
<comment type="similarity">
    <text evidence="4">Belongs to the GHMP kinase family. IspE subfamily.</text>
</comment>
<accession>O81014</accession>
<accession>Q9GI18</accession>
<feature type="transit peptide" description="Chloroplast" evidence="1">
    <location>
        <begin position="1"/>
        <end position="72"/>
    </location>
</feature>
<feature type="chain" id="PRO_0000016479" description="4-diphosphocytidyl-2-C-methyl-D-erythritol kinase, chloroplastic">
    <location>
        <begin position="73"/>
        <end position="383"/>
    </location>
</feature>
<feature type="binding site" evidence="1">
    <location>
        <begin position="165"/>
        <end position="175"/>
    </location>
    <ligand>
        <name>ATP</name>
        <dbReference type="ChEBI" id="CHEBI:30616"/>
    </ligand>
</feature>
<feature type="sequence conflict" description="In Ref. 2; AAG01340." evidence="4" ref="2">
    <original>T</original>
    <variation>A</variation>
    <location>
        <position position="11"/>
    </location>
</feature>
<feature type="sequence conflict" description="In Ref. 2; AAG01340." evidence="4" ref="2">
    <original>D</original>
    <variation>G</variation>
    <location>
        <position position="109"/>
    </location>
</feature>
<feature type="sequence conflict" description="In Ref. 2; AAG01340." evidence="4" ref="2">
    <original>E</original>
    <variation>K</variation>
    <location>
        <position position="272"/>
    </location>
</feature>
<feature type="sequence conflict" description="In Ref. 2; AAG01340." evidence="4" ref="2">
    <original>N</original>
    <variation>D</variation>
    <location>
        <position position="346"/>
    </location>
</feature>
<organism>
    <name type="scientific">Arabidopsis thaliana</name>
    <name type="common">Mouse-ear cress</name>
    <dbReference type="NCBI Taxonomy" id="3702"/>
    <lineage>
        <taxon>Eukaryota</taxon>
        <taxon>Viridiplantae</taxon>
        <taxon>Streptophyta</taxon>
        <taxon>Embryophyta</taxon>
        <taxon>Tracheophyta</taxon>
        <taxon>Spermatophyta</taxon>
        <taxon>Magnoliopsida</taxon>
        <taxon>eudicotyledons</taxon>
        <taxon>Gunneridae</taxon>
        <taxon>Pentapetalae</taxon>
        <taxon>rosids</taxon>
        <taxon>malvids</taxon>
        <taxon>Brassicales</taxon>
        <taxon>Brassicaceae</taxon>
        <taxon>Camelineae</taxon>
        <taxon>Arabidopsis</taxon>
    </lineage>
</organism>
<gene>
    <name type="primary">ISPE</name>
    <name type="synonym">CMK</name>
    <name type="synonym">PDE227</name>
    <name type="ordered locus">At2g26930</name>
    <name type="ORF">F12C20.3</name>
</gene>
<evidence type="ECO:0000255" key="1"/>
<evidence type="ECO:0000269" key="2">
    <source>
    </source>
</evidence>
<evidence type="ECO:0000269" key="3">
    <source>
    </source>
</evidence>
<evidence type="ECO:0000305" key="4"/>
<evidence type="ECO:0000305" key="5">
    <source>
    </source>
</evidence>
<dbReference type="EC" id="2.7.1.148"/>
<dbReference type="EMBL" id="AB037877">
    <property type="protein sequence ID" value="BAB21593.1"/>
    <property type="molecule type" value="mRNA"/>
</dbReference>
<dbReference type="EMBL" id="AF288615">
    <property type="protein sequence ID" value="AAG01340.1"/>
    <property type="molecule type" value="mRNA"/>
</dbReference>
<dbReference type="EMBL" id="AC005168">
    <property type="protein sequence ID" value="AAC32234.1"/>
    <property type="molecule type" value="Genomic_DNA"/>
</dbReference>
<dbReference type="EMBL" id="CP002685">
    <property type="protein sequence ID" value="AEC07908.1"/>
    <property type="molecule type" value="Genomic_DNA"/>
</dbReference>
<dbReference type="EMBL" id="AY136394">
    <property type="protein sequence ID" value="AAM97060.1"/>
    <property type="molecule type" value="mRNA"/>
</dbReference>
<dbReference type="EMBL" id="BT000208">
    <property type="protein sequence ID" value="AAN15527.1"/>
    <property type="molecule type" value="mRNA"/>
</dbReference>
<dbReference type="PIR" id="T02642">
    <property type="entry name" value="T02642"/>
</dbReference>
<dbReference type="SMR" id="O81014"/>
<dbReference type="BioGRID" id="2586">
    <property type="interactions" value="1"/>
</dbReference>
<dbReference type="FunCoup" id="O81014">
    <property type="interactions" value="883"/>
</dbReference>
<dbReference type="STRING" id="3702.O81014"/>
<dbReference type="ChEMBL" id="CHEMBL1293253"/>
<dbReference type="PaxDb" id="3702-AT2G26930.1"/>
<dbReference type="ProteomicsDB" id="250640"/>
<dbReference type="EnsemblPlants" id="AT2G26930.1">
    <property type="protein sequence ID" value="AT2G26930.1"/>
    <property type="gene ID" value="AT2G26930"/>
</dbReference>
<dbReference type="GeneID" id="817234"/>
<dbReference type="Gramene" id="AT2G26930.1">
    <property type="protein sequence ID" value="AT2G26930.1"/>
    <property type="gene ID" value="AT2G26930"/>
</dbReference>
<dbReference type="KEGG" id="ath:AT2G26930"/>
<dbReference type="Araport" id="AT2G26930"/>
<dbReference type="TAIR" id="AT2G26930">
    <property type="gene designation" value="CDPMEK"/>
</dbReference>
<dbReference type="eggNOG" id="ENOG502QT9C">
    <property type="taxonomic scope" value="Eukaryota"/>
</dbReference>
<dbReference type="HOGENOM" id="CLU_053057_0_0_1"/>
<dbReference type="InParanoid" id="O81014"/>
<dbReference type="OMA" id="ACDALWG"/>
<dbReference type="OrthoDB" id="3191556at2759"/>
<dbReference type="PhylomeDB" id="O81014"/>
<dbReference type="BioCyc" id="ARA:AT2G26930-MONOMER"/>
<dbReference type="UniPathway" id="UPA00056">
    <property type="reaction ID" value="UER00094"/>
</dbReference>
<dbReference type="PRO" id="PR:O81014"/>
<dbReference type="Proteomes" id="UP000006548">
    <property type="component" value="Chromosome 2"/>
</dbReference>
<dbReference type="ExpressionAtlas" id="O81014">
    <property type="expression patterns" value="baseline and differential"/>
</dbReference>
<dbReference type="GO" id="GO:0009507">
    <property type="term" value="C:chloroplast"/>
    <property type="evidence" value="ECO:0007005"/>
    <property type="project" value="TAIR"/>
</dbReference>
<dbReference type="GO" id="GO:0009570">
    <property type="term" value="C:chloroplast stroma"/>
    <property type="evidence" value="ECO:0007669"/>
    <property type="project" value="UniProtKB-SubCell"/>
</dbReference>
<dbReference type="GO" id="GO:0050515">
    <property type="term" value="F:4-(cytidine 5'-diphospho)-2-C-methyl-D-erythritol kinase activity"/>
    <property type="evidence" value="ECO:0000250"/>
    <property type="project" value="TAIR"/>
</dbReference>
<dbReference type="GO" id="GO:0005524">
    <property type="term" value="F:ATP binding"/>
    <property type="evidence" value="ECO:0007669"/>
    <property type="project" value="UniProtKB-KW"/>
</dbReference>
<dbReference type="GO" id="GO:0019288">
    <property type="term" value="P:isopentenyl diphosphate biosynthetic process, methylerythritol 4-phosphate pathway"/>
    <property type="evidence" value="ECO:0007669"/>
    <property type="project" value="UniProtKB-UniPathway"/>
</dbReference>
<dbReference type="GO" id="GO:0016114">
    <property type="term" value="P:terpenoid biosynthetic process"/>
    <property type="evidence" value="ECO:0007669"/>
    <property type="project" value="InterPro"/>
</dbReference>
<dbReference type="FunFam" id="3.30.230.10:FF:000045">
    <property type="entry name" value="4-diphosphocytidyl-2-C-methyl-D-erythritol kinase, chloroplastic"/>
    <property type="match status" value="1"/>
</dbReference>
<dbReference type="FunFam" id="3.30.70.890:FF:000009">
    <property type="entry name" value="4-diphosphocytidyl-2-C-methyl-D-erythritol kinase, chloroplastic"/>
    <property type="match status" value="1"/>
</dbReference>
<dbReference type="Gene3D" id="3.30.230.10">
    <property type="match status" value="1"/>
</dbReference>
<dbReference type="Gene3D" id="3.30.70.890">
    <property type="entry name" value="GHMP kinase, C-terminal domain"/>
    <property type="match status" value="1"/>
</dbReference>
<dbReference type="HAMAP" id="MF_00061">
    <property type="entry name" value="IspE"/>
    <property type="match status" value="1"/>
</dbReference>
<dbReference type="InterPro" id="IPR013750">
    <property type="entry name" value="GHMP_kinase_C_dom"/>
</dbReference>
<dbReference type="InterPro" id="IPR036554">
    <property type="entry name" value="GHMP_kinase_C_sf"/>
</dbReference>
<dbReference type="InterPro" id="IPR006204">
    <property type="entry name" value="GHMP_kinase_N_dom"/>
</dbReference>
<dbReference type="InterPro" id="IPR004424">
    <property type="entry name" value="IspE"/>
</dbReference>
<dbReference type="InterPro" id="IPR020568">
    <property type="entry name" value="Ribosomal_Su5_D2-typ_SF"/>
</dbReference>
<dbReference type="InterPro" id="IPR014721">
    <property type="entry name" value="Ribsml_uS5_D2-typ_fold_subgr"/>
</dbReference>
<dbReference type="NCBIfam" id="TIGR00154">
    <property type="entry name" value="ispE"/>
    <property type="match status" value="1"/>
</dbReference>
<dbReference type="PANTHER" id="PTHR43527">
    <property type="entry name" value="4-DIPHOSPHOCYTIDYL-2-C-METHYL-D-ERYTHRITOL KINASE, CHLOROPLASTIC"/>
    <property type="match status" value="1"/>
</dbReference>
<dbReference type="PANTHER" id="PTHR43527:SF2">
    <property type="entry name" value="4-DIPHOSPHOCYTIDYL-2-C-METHYL-D-ERYTHRITOL KINASE, CHLOROPLASTIC"/>
    <property type="match status" value="1"/>
</dbReference>
<dbReference type="Pfam" id="PF08544">
    <property type="entry name" value="GHMP_kinases_C"/>
    <property type="match status" value="1"/>
</dbReference>
<dbReference type="Pfam" id="PF00288">
    <property type="entry name" value="GHMP_kinases_N"/>
    <property type="match status" value="1"/>
</dbReference>
<dbReference type="SUPFAM" id="SSF55060">
    <property type="entry name" value="GHMP Kinase, C-terminal domain"/>
    <property type="match status" value="1"/>
</dbReference>
<dbReference type="SUPFAM" id="SSF54211">
    <property type="entry name" value="Ribosomal protein S5 domain 2-like"/>
    <property type="match status" value="1"/>
</dbReference>
<sequence>MATASPPFISTLSFTHSSFKTSSSSSFSPKLLRPLLSFSVKASRKQVEIVFDPDERLNKIGDDVDKEAPLSRLKLFSPCKINVFLRITGKREDGFHDLASLFHVISLGDTIKFSLSPSKSKDRLSTNVQGVPVDGRNLIIKALNLYRKKTGSNRFFWIHLDKKVPTGAGLGGGSSNAATALWAANELNGGLVTENELQDWSSEIGSDIPFFFSHGAAYCTGRGEIVQDLPPPFPLDLPMVLIKPREACSTAEVYKRLRLDQTSNINPLTLLENVTSNGVSQSICVNDLEPPAFSVLPSLKRLKQRIIASGRGEYDAVFMSGSGSTIIGIGSPDPPQFIYDDEEYKNVFLSEANFMTREANEWYKEPASANATTSSAESRMDFQ</sequence>